<dbReference type="EC" id="2.5.1.-" evidence="1"/>
<dbReference type="EMBL" id="CP001173">
    <property type="protein sequence ID" value="ACI27708.1"/>
    <property type="molecule type" value="Genomic_DNA"/>
</dbReference>
<dbReference type="RefSeq" id="WP_000903870.1">
    <property type="nucleotide sequence ID" value="NC_011333.1"/>
</dbReference>
<dbReference type="SMR" id="B5Z809"/>
<dbReference type="KEGG" id="hpg:HPG27_954"/>
<dbReference type="HOGENOM" id="CLU_052665_1_0_7"/>
<dbReference type="Proteomes" id="UP000001735">
    <property type="component" value="Chromosome"/>
</dbReference>
<dbReference type="GO" id="GO:0016765">
    <property type="term" value="F:transferase activity, transferring alkyl or aryl (other than methyl) groups"/>
    <property type="evidence" value="ECO:0007669"/>
    <property type="project" value="InterPro"/>
</dbReference>
<dbReference type="GO" id="GO:0002098">
    <property type="term" value="P:tRNA wobble uridine modification"/>
    <property type="evidence" value="ECO:0007669"/>
    <property type="project" value="InterPro"/>
</dbReference>
<dbReference type="CDD" id="cd02440">
    <property type="entry name" value="AdoMet_MTases"/>
    <property type="match status" value="1"/>
</dbReference>
<dbReference type="Gene3D" id="3.40.50.150">
    <property type="entry name" value="Vaccinia Virus protein VP39"/>
    <property type="match status" value="1"/>
</dbReference>
<dbReference type="HAMAP" id="MF_01590">
    <property type="entry name" value="tRNA_carboxymethyltr_CmoB"/>
    <property type="match status" value="1"/>
</dbReference>
<dbReference type="InterPro" id="IPR010017">
    <property type="entry name" value="CmoB"/>
</dbReference>
<dbReference type="InterPro" id="IPR027555">
    <property type="entry name" value="Mo5U34_MeTrfas-like"/>
</dbReference>
<dbReference type="InterPro" id="IPR029063">
    <property type="entry name" value="SAM-dependent_MTases_sf"/>
</dbReference>
<dbReference type="NCBIfam" id="NF011650">
    <property type="entry name" value="PRK15068.1"/>
    <property type="match status" value="1"/>
</dbReference>
<dbReference type="NCBIfam" id="TIGR00452">
    <property type="entry name" value="tRNA 5-methoxyuridine(34)/uridine 5-oxyacetic acid(34) synthase CmoB"/>
    <property type="match status" value="1"/>
</dbReference>
<dbReference type="Pfam" id="PF08003">
    <property type="entry name" value="Methyltransf_9"/>
    <property type="match status" value="1"/>
</dbReference>
<dbReference type="SUPFAM" id="SSF53335">
    <property type="entry name" value="S-adenosyl-L-methionine-dependent methyltransferases"/>
    <property type="match status" value="1"/>
</dbReference>
<comment type="function">
    <text evidence="1">Catalyzes carboxymethyl transfer from carboxy-S-adenosyl-L-methionine (Cx-SAM) to 5-hydroxyuridine (ho5U) to form 5-carboxymethoxyuridine (cmo5U) at position 34 in tRNAs.</text>
</comment>
<comment type="catalytic activity">
    <reaction evidence="1">
        <text>carboxy-S-adenosyl-L-methionine + 5-hydroxyuridine(34) in tRNA = 5-carboxymethoxyuridine(34) in tRNA + S-adenosyl-L-homocysteine + H(+)</text>
        <dbReference type="Rhea" id="RHEA:52848"/>
        <dbReference type="Rhea" id="RHEA-COMP:13381"/>
        <dbReference type="Rhea" id="RHEA-COMP:13383"/>
        <dbReference type="ChEBI" id="CHEBI:15378"/>
        <dbReference type="ChEBI" id="CHEBI:57856"/>
        <dbReference type="ChEBI" id="CHEBI:134278"/>
        <dbReference type="ChEBI" id="CHEBI:136877"/>
        <dbReference type="ChEBI" id="CHEBI:136879"/>
    </reaction>
</comment>
<comment type="subunit">
    <text evidence="1">Homotetramer.</text>
</comment>
<comment type="similarity">
    <text evidence="1">Belongs to the class I-like SAM-binding methyltransferase superfamily. CmoB family.</text>
</comment>
<proteinExistence type="inferred from homology"/>
<keyword id="KW-1185">Reference proteome</keyword>
<keyword id="KW-0808">Transferase</keyword>
<keyword id="KW-0819">tRNA processing</keyword>
<reference key="1">
    <citation type="journal article" date="2009" name="J. Bacteriol.">
        <title>The complete genome sequence of Helicobacter pylori strain G27.</title>
        <authorList>
            <person name="Baltrus D.A."/>
            <person name="Amieva M.R."/>
            <person name="Covacci A."/>
            <person name="Lowe T.M."/>
            <person name="Merrell D.S."/>
            <person name="Ottemann K.M."/>
            <person name="Stein M."/>
            <person name="Salama N.R."/>
            <person name="Guillemin K."/>
        </authorList>
    </citation>
    <scope>NUCLEOTIDE SEQUENCE [LARGE SCALE GENOMIC DNA]</scope>
    <source>
        <strain>G27</strain>
    </source>
</reference>
<accession>B5Z809</accession>
<organism>
    <name type="scientific">Helicobacter pylori (strain G27)</name>
    <dbReference type="NCBI Taxonomy" id="563041"/>
    <lineage>
        <taxon>Bacteria</taxon>
        <taxon>Pseudomonadati</taxon>
        <taxon>Campylobacterota</taxon>
        <taxon>Epsilonproteobacteria</taxon>
        <taxon>Campylobacterales</taxon>
        <taxon>Helicobacteraceae</taxon>
        <taxon>Helicobacter</taxon>
    </lineage>
</organism>
<gene>
    <name evidence="1" type="primary">cmoB</name>
    <name type="ordered locus">HPG27_954</name>
</gene>
<name>CMOB_HELPG</name>
<sequence length="261" mass="30024">MLICNDKFNPKTLLEEIMALRPWRKGPFEISQIKIDSEWDSSIKWDLVKNATPLKDKVVADVGCNNGYYLFKMLEHGPKSLVGFDPGVLVKKQFEFLAPFFDKEKKIIYESLGVEDLHEKYSNAFDVIFCLGVLYHRKSPLEALKALYHALKIRGELVLDTLIIDSPLDIALCPKKTYAKMKNVYFIPSVSALKGWCERVGFENFEVLSVLKTTPKEQRKTDFILGQSLEDFLDKTDHSKTLEGYDAPLRGYFKMLKPSKR</sequence>
<evidence type="ECO:0000255" key="1">
    <source>
        <dbReference type="HAMAP-Rule" id="MF_01590"/>
    </source>
</evidence>
<feature type="chain" id="PRO_0000381858" description="tRNA U34 carboxymethyltransferase">
    <location>
        <begin position="1"/>
        <end position="261"/>
    </location>
</feature>
<feature type="binding site" evidence="1">
    <location>
        <position position="25"/>
    </location>
    <ligand>
        <name>carboxy-S-adenosyl-L-methionine</name>
        <dbReference type="ChEBI" id="CHEBI:134278"/>
    </ligand>
</feature>
<feature type="binding site" evidence="1">
    <location>
        <position position="39"/>
    </location>
    <ligand>
        <name>carboxy-S-adenosyl-L-methionine</name>
        <dbReference type="ChEBI" id="CHEBI:134278"/>
    </ligand>
</feature>
<feature type="binding site" evidence="1">
    <location>
        <position position="44"/>
    </location>
    <ligand>
        <name>carboxy-S-adenosyl-L-methionine</name>
        <dbReference type="ChEBI" id="CHEBI:134278"/>
    </ligand>
</feature>
<feature type="binding site" evidence="1">
    <location>
        <position position="63"/>
    </location>
    <ligand>
        <name>carboxy-S-adenosyl-L-methionine</name>
        <dbReference type="ChEBI" id="CHEBI:134278"/>
    </ligand>
</feature>
<feature type="binding site" evidence="1">
    <location>
        <begin position="114"/>
        <end position="115"/>
    </location>
    <ligand>
        <name>carboxy-S-adenosyl-L-methionine</name>
        <dbReference type="ChEBI" id="CHEBI:134278"/>
    </ligand>
</feature>
<feature type="binding site" evidence="1">
    <location>
        <position position="135"/>
    </location>
    <ligand>
        <name>carboxy-S-adenosyl-L-methionine</name>
        <dbReference type="ChEBI" id="CHEBI:134278"/>
    </ligand>
</feature>
<feature type="binding site" evidence="1">
    <location>
        <position position="250"/>
    </location>
    <ligand>
        <name>carboxy-S-adenosyl-L-methionine</name>
        <dbReference type="ChEBI" id="CHEBI:134278"/>
    </ligand>
</feature>
<protein>
    <recommendedName>
        <fullName evidence="1">tRNA U34 carboxymethyltransferase</fullName>
        <ecNumber evidence="1">2.5.1.-</ecNumber>
    </recommendedName>
</protein>